<organism>
    <name type="scientific">Methylorubrum extorquens (strain PA1)</name>
    <name type="common">Methylobacterium extorquens</name>
    <dbReference type="NCBI Taxonomy" id="419610"/>
    <lineage>
        <taxon>Bacteria</taxon>
        <taxon>Pseudomonadati</taxon>
        <taxon>Pseudomonadota</taxon>
        <taxon>Alphaproteobacteria</taxon>
        <taxon>Hyphomicrobiales</taxon>
        <taxon>Methylobacteriaceae</taxon>
        <taxon>Methylorubrum</taxon>
    </lineage>
</organism>
<sequence length="1405" mass="154860">MNQEVMNLFNQQAQPQSFDQIKISISSPEKILSWSYGEIKKPETINYRTFKPERDGLFCARIFGPIKDYECLCGKYKRMKYKGVICEKCGVEVTLARVRRDRMGHIELAAPVAHIWFLKSLPSRIGLLLDMALKDLERILYFESYVVIEPGLTPLKERQLLSEEEYLRAQEEYGEDSFTAMIGAEAIRRILMELDLEGIATSLKEEIATTTSELKPKKLMKRLKIIEAFQLSGNKPEWMILTVVPVIPPDLRPLVPLDGGRFATSDLNDLYRRVINRNNRLKRLIELRAPDIIIRNEKRMLQEAVDALFDNGRRGRVITGANKRPLKSLADMLKGKQGRFRQNLLGKRVDYSGRSVIVVGPELKLHQCGLPKKMALELFKPFIYARLDAKGFSATVKQAKKLVEKEKPEVWDILDEVIREHPVMLNRAPTLHRLGIQAFEPKLIEGKAIQLHPLVCAAFNADFDGDQMAVHVPLSLEAQLEARVLMMSTNNILHPANGQPIIVPSQDIVLGLYYLSIVADGSVGEHKADDKNNPMQGVFGDIGQLEHALAAKSVSLHSKIKWRWRGLGPDGEPVSRIYDTTPGRVILSGVLPMHPKVPFDVVNKLMTKKEISAMIDTVYRHCGQKESVIFCDRIMALGFSHAFKAGISFGKDDMVVPENKWSIVEDTRTLVKDYEQQYNDGLITQGEKYNKVVDAWAKCSDKLAAEMMGRISAVQKDENGADKQVNSIYMMSHSGARGSPAQMKQLAAMRGLMAKPSGEIIETPIISNFKEGLDVLEYFNSTHGARKGLADTALKTANSGYLTRRLVDVAQDAVIREVDCGTTNGIKMRAIIDAGQVVAPLSIRILGRATAEDLVAQDGTVIVKTNETIEERHLPAINAAGIQEVKIRSVLVCQTKSGVCATCYGRDLARGTPVNMGEAVGVIAAQSIGEPGTQLTMRTFHIGGAAQIADSSFVESSFEGTIKIRNRSLAKNSDGDLIATGRSVAVVIVGPDGTERAVHRLQYGARVRVDEGDTIKRGQRIAEWDPYTRPIVAEVDGIVGYEDLYDGQSITETTDESTGIAKRVVIDWRGSSRTSDLKPAMLVLDQDGKPVKLARGSDARYYLPVDAIIGLDPGAKVRAGDVLARVSTDSAKTRDITGGLPRVAELFEARRPKDAAIIAEKSGSIAFGRDYKNKRRLTLTPHDGSDAVEYLIPKGKHIHLQDGDVVELGDYIVDGNPAPHDILAIKGVEELAAYLVNEIQEVYRLQGVSINDKHIEVIVRQMLQKVEITDGGDSDILTGDQIDRTELADFNEKLLAEGKKPIQGVPVLLGITKASLQTKSFISAASFQETTRVLTEAAVNGKVDTLDGLKENVIVGSLIPAGTGSLAADIRSIARRRDNLILQQRSAENAANAAELSELPPAAAE</sequence>
<gene>
    <name evidence="1" type="primary">rpoC</name>
    <name type="ordered locus">Mext_4018</name>
</gene>
<name>RPOC_METEP</name>
<accession>A9W8N9</accession>
<protein>
    <recommendedName>
        <fullName evidence="1">DNA-directed RNA polymerase subunit beta'</fullName>
        <shortName evidence="1">RNAP subunit beta'</shortName>
        <ecNumber evidence="1">2.7.7.6</ecNumber>
    </recommendedName>
    <alternativeName>
        <fullName evidence="1">RNA polymerase subunit beta'</fullName>
    </alternativeName>
    <alternativeName>
        <fullName evidence="1">Transcriptase subunit beta'</fullName>
    </alternativeName>
</protein>
<comment type="function">
    <text evidence="1">DNA-dependent RNA polymerase catalyzes the transcription of DNA into RNA using the four ribonucleoside triphosphates as substrates.</text>
</comment>
<comment type="catalytic activity">
    <reaction evidence="1">
        <text>RNA(n) + a ribonucleoside 5'-triphosphate = RNA(n+1) + diphosphate</text>
        <dbReference type="Rhea" id="RHEA:21248"/>
        <dbReference type="Rhea" id="RHEA-COMP:14527"/>
        <dbReference type="Rhea" id="RHEA-COMP:17342"/>
        <dbReference type="ChEBI" id="CHEBI:33019"/>
        <dbReference type="ChEBI" id="CHEBI:61557"/>
        <dbReference type="ChEBI" id="CHEBI:140395"/>
        <dbReference type="EC" id="2.7.7.6"/>
    </reaction>
</comment>
<comment type="cofactor">
    <cofactor evidence="1">
        <name>Mg(2+)</name>
        <dbReference type="ChEBI" id="CHEBI:18420"/>
    </cofactor>
    <text evidence="1">Binds 1 Mg(2+) ion per subunit.</text>
</comment>
<comment type="cofactor">
    <cofactor evidence="1">
        <name>Zn(2+)</name>
        <dbReference type="ChEBI" id="CHEBI:29105"/>
    </cofactor>
    <text evidence="1">Binds 2 Zn(2+) ions per subunit.</text>
</comment>
<comment type="subunit">
    <text evidence="1">The RNAP catalytic core consists of 2 alpha, 1 beta, 1 beta' and 1 omega subunit. When a sigma factor is associated with the core the holoenzyme is formed, which can initiate transcription.</text>
</comment>
<comment type="similarity">
    <text evidence="1">Belongs to the RNA polymerase beta' chain family.</text>
</comment>
<proteinExistence type="inferred from homology"/>
<feature type="chain" id="PRO_1000141780" description="DNA-directed RNA polymerase subunit beta'">
    <location>
        <begin position="1"/>
        <end position="1405"/>
    </location>
</feature>
<feature type="binding site" evidence="1">
    <location>
        <position position="71"/>
    </location>
    <ligand>
        <name>Zn(2+)</name>
        <dbReference type="ChEBI" id="CHEBI:29105"/>
        <label>1</label>
    </ligand>
</feature>
<feature type="binding site" evidence="1">
    <location>
        <position position="73"/>
    </location>
    <ligand>
        <name>Zn(2+)</name>
        <dbReference type="ChEBI" id="CHEBI:29105"/>
        <label>1</label>
    </ligand>
</feature>
<feature type="binding site" evidence="1">
    <location>
        <position position="86"/>
    </location>
    <ligand>
        <name>Zn(2+)</name>
        <dbReference type="ChEBI" id="CHEBI:29105"/>
        <label>1</label>
    </ligand>
</feature>
<feature type="binding site" evidence="1">
    <location>
        <position position="89"/>
    </location>
    <ligand>
        <name>Zn(2+)</name>
        <dbReference type="ChEBI" id="CHEBI:29105"/>
        <label>1</label>
    </ligand>
</feature>
<feature type="binding site" evidence="1">
    <location>
        <position position="462"/>
    </location>
    <ligand>
        <name>Mg(2+)</name>
        <dbReference type="ChEBI" id="CHEBI:18420"/>
    </ligand>
</feature>
<feature type="binding site" evidence="1">
    <location>
        <position position="464"/>
    </location>
    <ligand>
        <name>Mg(2+)</name>
        <dbReference type="ChEBI" id="CHEBI:18420"/>
    </ligand>
</feature>
<feature type="binding site" evidence="1">
    <location>
        <position position="466"/>
    </location>
    <ligand>
        <name>Mg(2+)</name>
        <dbReference type="ChEBI" id="CHEBI:18420"/>
    </ligand>
</feature>
<feature type="binding site" evidence="1">
    <location>
        <position position="820"/>
    </location>
    <ligand>
        <name>Zn(2+)</name>
        <dbReference type="ChEBI" id="CHEBI:29105"/>
        <label>2</label>
    </ligand>
</feature>
<feature type="binding site" evidence="1">
    <location>
        <position position="893"/>
    </location>
    <ligand>
        <name>Zn(2+)</name>
        <dbReference type="ChEBI" id="CHEBI:29105"/>
        <label>2</label>
    </ligand>
</feature>
<feature type="binding site" evidence="1">
    <location>
        <position position="900"/>
    </location>
    <ligand>
        <name>Zn(2+)</name>
        <dbReference type="ChEBI" id="CHEBI:29105"/>
        <label>2</label>
    </ligand>
</feature>
<feature type="binding site" evidence="1">
    <location>
        <position position="903"/>
    </location>
    <ligand>
        <name>Zn(2+)</name>
        <dbReference type="ChEBI" id="CHEBI:29105"/>
        <label>2</label>
    </ligand>
</feature>
<dbReference type="EC" id="2.7.7.6" evidence="1"/>
<dbReference type="EMBL" id="CP000908">
    <property type="protein sequence ID" value="ABY32388.1"/>
    <property type="molecule type" value="Genomic_DNA"/>
</dbReference>
<dbReference type="RefSeq" id="WP_012255172.1">
    <property type="nucleotide sequence ID" value="NC_010172.1"/>
</dbReference>
<dbReference type="SMR" id="A9W8N9"/>
<dbReference type="GeneID" id="72991736"/>
<dbReference type="KEGG" id="mex:Mext_4018"/>
<dbReference type="eggNOG" id="COG0086">
    <property type="taxonomic scope" value="Bacteria"/>
</dbReference>
<dbReference type="HOGENOM" id="CLU_000524_3_1_5"/>
<dbReference type="BioCyc" id="MEXT419610:MEXT_RS20180-MONOMER"/>
<dbReference type="GO" id="GO:0000428">
    <property type="term" value="C:DNA-directed RNA polymerase complex"/>
    <property type="evidence" value="ECO:0007669"/>
    <property type="project" value="UniProtKB-KW"/>
</dbReference>
<dbReference type="GO" id="GO:0003677">
    <property type="term" value="F:DNA binding"/>
    <property type="evidence" value="ECO:0007669"/>
    <property type="project" value="UniProtKB-UniRule"/>
</dbReference>
<dbReference type="GO" id="GO:0003899">
    <property type="term" value="F:DNA-directed RNA polymerase activity"/>
    <property type="evidence" value="ECO:0007669"/>
    <property type="project" value="UniProtKB-UniRule"/>
</dbReference>
<dbReference type="GO" id="GO:0000287">
    <property type="term" value="F:magnesium ion binding"/>
    <property type="evidence" value="ECO:0007669"/>
    <property type="project" value="UniProtKB-UniRule"/>
</dbReference>
<dbReference type="GO" id="GO:0008270">
    <property type="term" value="F:zinc ion binding"/>
    <property type="evidence" value="ECO:0007669"/>
    <property type="project" value="UniProtKB-UniRule"/>
</dbReference>
<dbReference type="GO" id="GO:0006351">
    <property type="term" value="P:DNA-templated transcription"/>
    <property type="evidence" value="ECO:0007669"/>
    <property type="project" value="UniProtKB-UniRule"/>
</dbReference>
<dbReference type="CDD" id="cd02655">
    <property type="entry name" value="RNAP_beta'_C"/>
    <property type="match status" value="1"/>
</dbReference>
<dbReference type="CDD" id="cd01609">
    <property type="entry name" value="RNAP_beta'_N"/>
    <property type="match status" value="1"/>
</dbReference>
<dbReference type="Gene3D" id="1.10.132.30">
    <property type="match status" value="1"/>
</dbReference>
<dbReference type="Gene3D" id="1.10.150.390">
    <property type="match status" value="1"/>
</dbReference>
<dbReference type="Gene3D" id="1.10.1790.20">
    <property type="match status" value="1"/>
</dbReference>
<dbReference type="Gene3D" id="1.10.40.90">
    <property type="match status" value="1"/>
</dbReference>
<dbReference type="Gene3D" id="2.40.40.20">
    <property type="match status" value="1"/>
</dbReference>
<dbReference type="Gene3D" id="2.40.50.100">
    <property type="match status" value="3"/>
</dbReference>
<dbReference type="Gene3D" id="4.10.860.120">
    <property type="entry name" value="RNA polymerase II, clamp domain"/>
    <property type="match status" value="1"/>
</dbReference>
<dbReference type="Gene3D" id="1.10.274.100">
    <property type="entry name" value="RNA polymerase Rpb1, domain 3"/>
    <property type="match status" value="2"/>
</dbReference>
<dbReference type="HAMAP" id="MF_01322">
    <property type="entry name" value="RNApol_bact_RpoC"/>
    <property type="match status" value="1"/>
</dbReference>
<dbReference type="InterPro" id="IPR045867">
    <property type="entry name" value="DNA-dir_RpoC_beta_prime"/>
</dbReference>
<dbReference type="InterPro" id="IPR012754">
    <property type="entry name" value="DNA-dir_RpoC_beta_prime_bact"/>
</dbReference>
<dbReference type="InterPro" id="IPR000722">
    <property type="entry name" value="RNA_pol_asu"/>
</dbReference>
<dbReference type="InterPro" id="IPR006592">
    <property type="entry name" value="RNA_pol_N"/>
</dbReference>
<dbReference type="InterPro" id="IPR007080">
    <property type="entry name" value="RNA_pol_Rpb1_1"/>
</dbReference>
<dbReference type="InterPro" id="IPR007066">
    <property type="entry name" value="RNA_pol_Rpb1_3"/>
</dbReference>
<dbReference type="InterPro" id="IPR042102">
    <property type="entry name" value="RNA_pol_Rpb1_3_sf"/>
</dbReference>
<dbReference type="InterPro" id="IPR007083">
    <property type="entry name" value="RNA_pol_Rpb1_4"/>
</dbReference>
<dbReference type="InterPro" id="IPR007081">
    <property type="entry name" value="RNA_pol_Rpb1_5"/>
</dbReference>
<dbReference type="InterPro" id="IPR044893">
    <property type="entry name" value="RNA_pol_Rpb1_clamp_domain"/>
</dbReference>
<dbReference type="InterPro" id="IPR038120">
    <property type="entry name" value="Rpb1_funnel_sf"/>
</dbReference>
<dbReference type="NCBIfam" id="TIGR02386">
    <property type="entry name" value="rpoC_TIGR"/>
    <property type="match status" value="1"/>
</dbReference>
<dbReference type="PANTHER" id="PTHR19376">
    <property type="entry name" value="DNA-DIRECTED RNA POLYMERASE"/>
    <property type="match status" value="1"/>
</dbReference>
<dbReference type="PANTHER" id="PTHR19376:SF54">
    <property type="entry name" value="DNA-DIRECTED RNA POLYMERASE SUBUNIT BETA"/>
    <property type="match status" value="1"/>
</dbReference>
<dbReference type="Pfam" id="PF04997">
    <property type="entry name" value="RNA_pol_Rpb1_1"/>
    <property type="match status" value="1"/>
</dbReference>
<dbReference type="Pfam" id="PF00623">
    <property type="entry name" value="RNA_pol_Rpb1_2"/>
    <property type="match status" value="1"/>
</dbReference>
<dbReference type="Pfam" id="PF04983">
    <property type="entry name" value="RNA_pol_Rpb1_3"/>
    <property type="match status" value="1"/>
</dbReference>
<dbReference type="Pfam" id="PF05000">
    <property type="entry name" value="RNA_pol_Rpb1_4"/>
    <property type="match status" value="1"/>
</dbReference>
<dbReference type="Pfam" id="PF04998">
    <property type="entry name" value="RNA_pol_Rpb1_5"/>
    <property type="match status" value="1"/>
</dbReference>
<dbReference type="SMART" id="SM00663">
    <property type="entry name" value="RPOLA_N"/>
    <property type="match status" value="1"/>
</dbReference>
<dbReference type="SUPFAM" id="SSF64484">
    <property type="entry name" value="beta and beta-prime subunits of DNA dependent RNA-polymerase"/>
    <property type="match status" value="1"/>
</dbReference>
<reference key="1">
    <citation type="submission" date="2007-12" db="EMBL/GenBank/DDBJ databases">
        <title>Complete sequence of Methylobacterium extorquens PA1.</title>
        <authorList>
            <consortium name="US DOE Joint Genome Institute"/>
            <person name="Copeland A."/>
            <person name="Lucas S."/>
            <person name="Lapidus A."/>
            <person name="Barry K."/>
            <person name="Glavina del Rio T."/>
            <person name="Dalin E."/>
            <person name="Tice H."/>
            <person name="Pitluck S."/>
            <person name="Saunders E."/>
            <person name="Brettin T."/>
            <person name="Bruce D."/>
            <person name="Detter J.C."/>
            <person name="Han C."/>
            <person name="Schmutz J."/>
            <person name="Larimer F."/>
            <person name="Land M."/>
            <person name="Hauser L."/>
            <person name="Kyrpides N."/>
            <person name="Kim E."/>
            <person name="Marx C."/>
            <person name="Richardson P."/>
        </authorList>
    </citation>
    <scope>NUCLEOTIDE SEQUENCE [LARGE SCALE GENOMIC DNA]</scope>
    <source>
        <strain>PA1</strain>
    </source>
</reference>
<keyword id="KW-0240">DNA-directed RNA polymerase</keyword>
<keyword id="KW-0460">Magnesium</keyword>
<keyword id="KW-0479">Metal-binding</keyword>
<keyword id="KW-0548">Nucleotidyltransferase</keyword>
<keyword id="KW-0804">Transcription</keyword>
<keyword id="KW-0808">Transferase</keyword>
<keyword id="KW-0862">Zinc</keyword>
<evidence type="ECO:0000255" key="1">
    <source>
        <dbReference type="HAMAP-Rule" id="MF_01322"/>
    </source>
</evidence>